<comment type="function">
    <text evidence="1">Bifunctional enzyme with both catalase and broad-spectrum peroxidase activity.</text>
</comment>
<comment type="catalytic activity">
    <reaction evidence="1">
        <text>H2O2 + AH2 = A + 2 H2O</text>
        <dbReference type="Rhea" id="RHEA:30275"/>
        <dbReference type="ChEBI" id="CHEBI:13193"/>
        <dbReference type="ChEBI" id="CHEBI:15377"/>
        <dbReference type="ChEBI" id="CHEBI:16240"/>
        <dbReference type="ChEBI" id="CHEBI:17499"/>
        <dbReference type="EC" id="1.11.1.21"/>
    </reaction>
</comment>
<comment type="catalytic activity">
    <reaction evidence="1">
        <text>2 H2O2 = O2 + 2 H2O</text>
        <dbReference type="Rhea" id="RHEA:20309"/>
        <dbReference type="ChEBI" id="CHEBI:15377"/>
        <dbReference type="ChEBI" id="CHEBI:15379"/>
        <dbReference type="ChEBI" id="CHEBI:16240"/>
        <dbReference type="EC" id="1.11.1.21"/>
    </reaction>
</comment>
<comment type="cofactor">
    <cofactor evidence="1">
        <name>heme b</name>
        <dbReference type="ChEBI" id="CHEBI:60344"/>
    </cofactor>
    <text evidence="1">Binds 1 heme b (iron(II)-protoporphyrin IX) group per dimer.</text>
</comment>
<comment type="subunit">
    <text evidence="1">Homodimer or homotetramer.</text>
</comment>
<comment type="PTM">
    <text evidence="1">Formation of the three residue Trp-Tyr-Met cross-link is important for the catalase, but not the peroxidase activity of the enzyme.</text>
</comment>
<comment type="similarity">
    <text evidence="1">Belongs to the peroxidase family. Peroxidase/catalase subfamily.</text>
</comment>
<sequence length="723" mass="78888">MDPKTSAGQCPVMHGANTTAAQSNTAWWPNALNLDILHQHDTKTNPLGEGYRYREAVKQLDVAALKADLTALMTRSQPWWPADWGHYGGLMIRMAWHAAGSYRVADGRGGAGTGNQRFAPLNSWPDNANLDKARRLLWPIKKKYGAKISWADLIVLAGNVAYESMGLKTYGFAFGREDIWHPEKDIYWGSEKAWLAPTGGEGSRYSGQRDLENPLAAVMMGLIYVNPEGVDGQPDPLKTAQDVRVTFARMAMDDEETVALTAGGHTVGKSHGNGSAANLGPAPEGADVHEQGLGWNNHSSRGIGRDTVTSGIEGAWTTHPTQWDNGYFKLLLGYDWELKKSPAGAWQWEPVGIKEDDKPVDVEDPSIRLNPIMTDADMAMKMDPAYRRISERFAADQAYFSEVFARAWFKLTHRDLGPKSRYIGPEIPAEDLLWQDPVPVGPTAYDVGAVKSRIATSGLSVGELVATAWDSARTWRGSDYRGGANGARIRLAPQKDWAGNEPERLARVLAVLEPIAAAAGASVADVIVLAGNVGVELAAKAAGFDVTVPFAPGRGDATQAQTDVESFEVLEPVADGFRNWQQRSFAVQPEEMLLDRAQLMGLSAPEMTVLVGGLRVLGANHGGSKHGVFTDRVGALTNDFFVTLTDMAHAWVPTGRNSYEIRERASGVVKYTATRADLVFGSNSVLRAYAEVYAQDDSREKFVRDFVAAWVKVMNADRYELQG</sequence>
<accession>B1Y7V8</accession>
<evidence type="ECO:0000255" key="1">
    <source>
        <dbReference type="HAMAP-Rule" id="MF_01961"/>
    </source>
</evidence>
<reference key="1">
    <citation type="submission" date="2008-03" db="EMBL/GenBank/DDBJ databases">
        <title>Complete sequence of Leptothrix cholodnii SP-6.</title>
        <authorList>
            <consortium name="US DOE Joint Genome Institute"/>
            <person name="Copeland A."/>
            <person name="Lucas S."/>
            <person name="Lapidus A."/>
            <person name="Glavina del Rio T."/>
            <person name="Dalin E."/>
            <person name="Tice H."/>
            <person name="Bruce D."/>
            <person name="Goodwin L."/>
            <person name="Pitluck S."/>
            <person name="Chertkov O."/>
            <person name="Brettin T."/>
            <person name="Detter J.C."/>
            <person name="Han C."/>
            <person name="Kuske C.R."/>
            <person name="Schmutz J."/>
            <person name="Larimer F."/>
            <person name="Land M."/>
            <person name="Hauser L."/>
            <person name="Kyrpides N."/>
            <person name="Lykidis A."/>
            <person name="Emerson D."/>
            <person name="Richardson P."/>
        </authorList>
    </citation>
    <scope>NUCLEOTIDE SEQUENCE [LARGE SCALE GENOMIC DNA]</scope>
    <source>
        <strain>ATCC 51168 / LMG 8142 / SP-6</strain>
    </source>
</reference>
<organism>
    <name type="scientific">Leptothrix cholodnii (strain ATCC 51168 / LMG 8142 / SP-6)</name>
    <name type="common">Leptothrix discophora (strain SP-6)</name>
    <dbReference type="NCBI Taxonomy" id="395495"/>
    <lineage>
        <taxon>Bacteria</taxon>
        <taxon>Pseudomonadati</taxon>
        <taxon>Pseudomonadota</taxon>
        <taxon>Betaproteobacteria</taxon>
        <taxon>Burkholderiales</taxon>
        <taxon>Sphaerotilaceae</taxon>
        <taxon>Leptothrix</taxon>
    </lineage>
</organism>
<gene>
    <name evidence="1" type="primary">katG</name>
    <name type="ordered locus">Lcho_0281</name>
</gene>
<feature type="chain" id="PRO_0000354826" description="Catalase-peroxidase">
    <location>
        <begin position="1"/>
        <end position="723"/>
    </location>
</feature>
<feature type="active site" description="Proton acceptor" evidence="1">
    <location>
        <position position="97"/>
    </location>
</feature>
<feature type="binding site" description="axial binding residue" evidence="1">
    <location>
        <position position="265"/>
    </location>
    <ligand>
        <name>heme b</name>
        <dbReference type="ChEBI" id="CHEBI:60344"/>
    </ligand>
    <ligandPart>
        <name>Fe</name>
        <dbReference type="ChEBI" id="CHEBI:18248"/>
    </ligandPart>
</feature>
<feature type="site" description="Transition state stabilizer" evidence="1">
    <location>
        <position position="93"/>
    </location>
</feature>
<feature type="cross-link" description="Tryptophyl-tyrosyl-methioninium (Trp-Tyr) (with M-250)" evidence="1">
    <location>
        <begin position="96"/>
        <end position="224"/>
    </location>
</feature>
<feature type="cross-link" description="Tryptophyl-tyrosyl-methioninium (Tyr-Met) (with W-96)" evidence="1">
    <location>
        <begin position="224"/>
        <end position="250"/>
    </location>
</feature>
<keyword id="KW-0349">Heme</keyword>
<keyword id="KW-0376">Hydrogen peroxide</keyword>
<keyword id="KW-0408">Iron</keyword>
<keyword id="KW-0479">Metal-binding</keyword>
<keyword id="KW-0560">Oxidoreductase</keyword>
<keyword id="KW-0575">Peroxidase</keyword>
<keyword id="KW-1185">Reference proteome</keyword>
<name>KATG_LEPCP</name>
<proteinExistence type="inferred from homology"/>
<protein>
    <recommendedName>
        <fullName evidence="1">Catalase-peroxidase</fullName>
        <shortName evidence="1">CP</shortName>
        <ecNumber evidence="1">1.11.1.21</ecNumber>
    </recommendedName>
    <alternativeName>
        <fullName evidence="1">Peroxidase/catalase</fullName>
    </alternativeName>
</protein>
<dbReference type="EC" id="1.11.1.21" evidence="1"/>
<dbReference type="EMBL" id="CP001013">
    <property type="protein sequence ID" value="ACB32556.1"/>
    <property type="molecule type" value="Genomic_DNA"/>
</dbReference>
<dbReference type="RefSeq" id="WP_012345318.1">
    <property type="nucleotide sequence ID" value="NC_010524.1"/>
</dbReference>
<dbReference type="SMR" id="B1Y7V8"/>
<dbReference type="STRING" id="395495.Lcho_0281"/>
<dbReference type="KEGG" id="lch:Lcho_0281"/>
<dbReference type="eggNOG" id="COG0376">
    <property type="taxonomic scope" value="Bacteria"/>
</dbReference>
<dbReference type="HOGENOM" id="CLU_025424_2_0_4"/>
<dbReference type="OrthoDB" id="9759743at2"/>
<dbReference type="Proteomes" id="UP000001693">
    <property type="component" value="Chromosome"/>
</dbReference>
<dbReference type="GO" id="GO:0005829">
    <property type="term" value="C:cytosol"/>
    <property type="evidence" value="ECO:0007669"/>
    <property type="project" value="TreeGrafter"/>
</dbReference>
<dbReference type="GO" id="GO:0004096">
    <property type="term" value="F:catalase activity"/>
    <property type="evidence" value="ECO:0007669"/>
    <property type="project" value="UniProtKB-UniRule"/>
</dbReference>
<dbReference type="GO" id="GO:0020037">
    <property type="term" value="F:heme binding"/>
    <property type="evidence" value="ECO:0007669"/>
    <property type="project" value="InterPro"/>
</dbReference>
<dbReference type="GO" id="GO:0046872">
    <property type="term" value="F:metal ion binding"/>
    <property type="evidence" value="ECO:0007669"/>
    <property type="project" value="UniProtKB-KW"/>
</dbReference>
<dbReference type="GO" id="GO:0070301">
    <property type="term" value="P:cellular response to hydrogen peroxide"/>
    <property type="evidence" value="ECO:0007669"/>
    <property type="project" value="TreeGrafter"/>
</dbReference>
<dbReference type="GO" id="GO:0042744">
    <property type="term" value="P:hydrogen peroxide catabolic process"/>
    <property type="evidence" value="ECO:0007669"/>
    <property type="project" value="UniProtKB-KW"/>
</dbReference>
<dbReference type="CDD" id="cd00649">
    <property type="entry name" value="catalase_peroxidase_1"/>
    <property type="match status" value="1"/>
</dbReference>
<dbReference type="FunFam" id="1.10.420.10:FF:000004">
    <property type="entry name" value="Catalase-peroxidase"/>
    <property type="match status" value="1"/>
</dbReference>
<dbReference type="FunFam" id="1.10.520.10:FF:000002">
    <property type="entry name" value="Catalase-peroxidase"/>
    <property type="match status" value="1"/>
</dbReference>
<dbReference type="Gene3D" id="1.10.520.10">
    <property type="match status" value="2"/>
</dbReference>
<dbReference type="Gene3D" id="1.10.420.10">
    <property type="entry name" value="Peroxidase, domain 2"/>
    <property type="match status" value="2"/>
</dbReference>
<dbReference type="HAMAP" id="MF_01961">
    <property type="entry name" value="Catal_peroxid"/>
    <property type="match status" value="1"/>
</dbReference>
<dbReference type="InterPro" id="IPR000763">
    <property type="entry name" value="Catalase_peroxidase"/>
</dbReference>
<dbReference type="InterPro" id="IPR002016">
    <property type="entry name" value="Haem_peroxidase"/>
</dbReference>
<dbReference type="InterPro" id="IPR010255">
    <property type="entry name" value="Haem_peroxidase_sf"/>
</dbReference>
<dbReference type="InterPro" id="IPR019794">
    <property type="entry name" value="Peroxidases_AS"/>
</dbReference>
<dbReference type="NCBIfam" id="TIGR00198">
    <property type="entry name" value="cat_per_HPI"/>
    <property type="match status" value="1"/>
</dbReference>
<dbReference type="NCBIfam" id="NF011635">
    <property type="entry name" value="PRK15061.1"/>
    <property type="match status" value="1"/>
</dbReference>
<dbReference type="PANTHER" id="PTHR30555:SF6">
    <property type="entry name" value="CATALASE-PEROXIDASE"/>
    <property type="match status" value="1"/>
</dbReference>
<dbReference type="PANTHER" id="PTHR30555">
    <property type="entry name" value="HYDROPEROXIDASE I, BIFUNCTIONAL CATALASE-PEROXIDASE"/>
    <property type="match status" value="1"/>
</dbReference>
<dbReference type="Pfam" id="PF00141">
    <property type="entry name" value="peroxidase"/>
    <property type="match status" value="2"/>
</dbReference>
<dbReference type="PRINTS" id="PR00460">
    <property type="entry name" value="BPEROXIDASE"/>
</dbReference>
<dbReference type="PRINTS" id="PR00458">
    <property type="entry name" value="PEROXIDASE"/>
</dbReference>
<dbReference type="SUPFAM" id="SSF48113">
    <property type="entry name" value="Heme-dependent peroxidases"/>
    <property type="match status" value="2"/>
</dbReference>
<dbReference type="PROSITE" id="PS00436">
    <property type="entry name" value="PEROXIDASE_2"/>
    <property type="match status" value="1"/>
</dbReference>
<dbReference type="PROSITE" id="PS50873">
    <property type="entry name" value="PEROXIDASE_4"/>
    <property type="match status" value="2"/>
</dbReference>